<sequence length="512" mass="57550">MFLQTALLLLSLGVAEPDCNTKTATGPYILDRYKPKPVTVSKKLYSATRYTTSAQNELLTAGYRTAWVAYCYNGGLVDSNTGCNARLLHYPPSRDELLLWGSSHQCSYGDICHDCWGSDSYACLGQLDPAKHWAPRKELVRRDANWKFAYHMCNIDWRCGVTTSPVFFNLQWVKNEVKVSTLLPNGSTVEHSAGEPLFWTEKDFSYLVKDNFEIQREEVKISCFVDPDYWVGERKTKKAFCQDGTNFFEVTSHQFCHQYACYNFSKDELLEAVYKERAHEKSKDLPFGNKSWTVVTASIDDLHALSAAQAFELEGLRASFAELDSRFRQLSEILDTVISSIAKIDERLIGRLIKAPVSSRFISEDKFLLHQCVDSVANNTNCVGDSAYVDGRWTHVGDNHPCTTVVDEPIGIDIYNFSALWYPSAAEVDFRGTVQSEDGWSFVVKSKDALIQTMMYTKNGGKGTSLTDLLDYPSGWLKGQLGGLLYGNIGVYLLIAFAFVLLIRLIKSAGLC</sequence>
<dbReference type="EMBL" id="M77280">
    <property type="protein sequence ID" value="AAA47918.1"/>
    <property type="molecule type" value="Genomic_RNA"/>
</dbReference>
<dbReference type="PIR" id="A40821">
    <property type="entry name" value="VGIVTH"/>
</dbReference>
<dbReference type="RefSeq" id="YP_145808.1">
    <property type="nucleotide sequence ID" value="NC_006506.1"/>
</dbReference>
<dbReference type="PDB" id="5XEA">
    <property type="method" value="X-ray"/>
    <property type="resolution" value="2.09 A"/>
    <property type="chains" value="A/B/C=18-483"/>
</dbReference>
<dbReference type="PDBsum" id="5XEA"/>
<dbReference type="SMR" id="P28977"/>
<dbReference type="TCDB" id="1.G.15.1.4">
    <property type="family name" value="the autographa californica nuclear polyhedrosis virus major envelope glycoprotein gp64 (gp64) family"/>
</dbReference>
<dbReference type="KEGG" id="vg:5075737"/>
<dbReference type="Proteomes" id="UP000008973">
    <property type="component" value="Genome"/>
</dbReference>
<dbReference type="GO" id="GO:0016020">
    <property type="term" value="C:membrane"/>
    <property type="evidence" value="ECO:0007669"/>
    <property type="project" value="UniProtKB-KW"/>
</dbReference>
<dbReference type="GO" id="GO:0019031">
    <property type="term" value="C:viral envelope"/>
    <property type="evidence" value="ECO:0007669"/>
    <property type="project" value="InterPro"/>
</dbReference>
<dbReference type="GO" id="GO:0055036">
    <property type="term" value="C:virion membrane"/>
    <property type="evidence" value="ECO:0007669"/>
    <property type="project" value="UniProtKB-SubCell"/>
</dbReference>
<dbReference type="GO" id="GO:0044003">
    <property type="term" value="P:symbiont-mediated perturbation of host process"/>
    <property type="evidence" value="ECO:0007669"/>
    <property type="project" value="InterPro"/>
</dbReference>
<dbReference type="Gene3D" id="6.10.250.2130">
    <property type="match status" value="1"/>
</dbReference>
<dbReference type="Gene3D" id="6.10.250.3010">
    <property type="match status" value="1"/>
</dbReference>
<dbReference type="InterPro" id="IPR004955">
    <property type="entry name" value="Baculovirus_Gp64"/>
</dbReference>
<dbReference type="Pfam" id="PF03273">
    <property type="entry name" value="Baculo_gp64"/>
    <property type="match status" value="1"/>
</dbReference>
<comment type="function">
    <text evidence="2">Attaches the virus to host cellular receptor and later induces fusion of virion with host membrane.</text>
</comment>
<comment type="subcellular location">
    <subcellularLocation>
        <location evidence="2">Virion membrane</location>
    </subcellularLocation>
</comment>
<keyword id="KW-0002">3D-structure</keyword>
<keyword id="KW-0325">Glycoprotein</keyword>
<keyword id="KW-0472">Membrane</keyword>
<keyword id="KW-1185">Reference proteome</keyword>
<keyword id="KW-0732">Signal</keyword>
<keyword id="KW-0812">Transmembrane</keyword>
<keyword id="KW-1133">Transmembrane helix</keyword>
<keyword id="KW-0946">Virion</keyword>
<reference key="1">
    <citation type="journal article" date="1992" name="Virology">
        <title>The glycoprotein of Thogoto virus (a tick-borne orthomyxo-like virus) is related to the baculovirus glycoprotein GP64.</title>
        <authorList>
            <person name="Morse M.A."/>
            <person name="Marriott A.C."/>
            <person name="Nuttall P.A."/>
        </authorList>
    </citation>
    <scope>NUCLEOTIDE SEQUENCE [GENOMIC RNA]</scope>
</reference>
<evidence type="ECO:0000255" key="1"/>
<evidence type="ECO:0000305" key="2"/>
<evidence type="ECO:0007829" key="3">
    <source>
        <dbReference type="PDB" id="5XEA"/>
    </source>
</evidence>
<protein>
    <recommendedName>
        <fullName>Envelope glycoprotein</fullName>
    </recommendedName>
    <alternativeName>
        <fullName>Surface glycoprotein 75</fullName>
    </alternativeName>
</protein>
<organism>
    <name type="scientific">Thogoto virus (isolate SiAr 126)</name>
    <name type="common">Tho</name>
    <dbReference type="NCBI Taxonomy" id="126796"/>
    <lineage>
        <taxon>Viruses</taxon>
        <taxon>Riboviria</taxon>
        <taxon>Orthornavirae</taxon>
        <taxon>Negarnaviricota</taxon>
        <taxon>Polyploviricotina</taxon>
        <taxon>Insthoviricetes</taxon>
        <taxon>Articulavirales</taxon>
        <taxon>Orthomyxoviridae</taxon>
        <taxon>Thogotovirus</taxon>
        <taxon>Thogotovirus thogotoense</taxon>
    </lineage>
</organism>
<name>ENV_THOGV</name>
<gene>
    <name type="ordered locus">Segment 4</name>
</gene>
<proteinExistence type="evidence at protein level"/>
<organismHost>
    <name type="scientific">Amblyomma variegatum</name>
    <name type="common">Tropical bont tick</name>
    <dbReference type="NCBI Taxonomy" id="34610"/>
</organismHost>
<organismHost>
    <name type="scientific">Cavia cutleri</name>
    <name type="common">Guinea pig</name>
    <dbReference type="NCBI Taxonomy" id="10144"/>
</organismHost>
<organismHost>
    <name type="scientific">Mungos mungo</name>
    <name type="common">Banded mongoose</name>
    <dbReference type="NCBI Taxonomy" id="210652"/>
</organismHost>
<organismHost>
    <name type="scientific">Rhipicephalus appendiculatus</name>
    <name type="common">Brown ear tick</name>
    <dbReference type="NCBI Taxonomy" id="34631"/>
</organismHost>
<organismHost>
    <name type="scientific">Rhipicephalus microplus</name>
    <name type="common">Cattle tick</name>
    <name type="synonym">Boophilus microplus</name>
    <dbReference type="NCBI Taxonomy" id="6941"/>
</organismHost>
<accession>P28977</accession>
<feature type="signal peptide" evidence="1">
    <location>
        <begin position="1"/>
        <end position="15"/>
    </location>
</feature>
<feature type="chain" id="PRO_0000039175" description="Envelope glycoprotein">
    <location>
        <begin position="16"/>
        <end position="512"/>
    </location>
</feature>
<feature type="transmembrane region" description="Helical" evidence="1">
    <location>
        <begin position="479"/>
        <end position="502"/>
    </location>
</feature>
<feature type="glycosylation site" description="N-linked (GlcNAc...) asparagine; by host" evidence="1">
    <location>
        <position position="185"/>
    </location>
</feature>
<feature type="glycosylation site" description="N-linked (GlcNAc...) asparagine; by host" evidence="1">
    <location>
        <position position="263"/>
    </location>
</feature>
<feature type="glycosylation site" description="N-linked (GlcNAc...) asparagine; by host" evidence="1">
    <location>
        <position position="289"/>
    </location>
</feature>
<feature type="glycosylation site" description="N-linked (GlcNAc...) asparagine; by host" evidence="1">
    <location>
        <position position="378"/>
    </location>
</feature>
<feature type="glycosylation site" description="N-linked (GlcNAc...) asparagine; by host" evidence="1">
    <location>
        <position position="416"/>
    </location>
</feature>
<feature type="strand" evidence="3">
    <location>
        <begin position="25"/>
        <end position="30"/>
    </location>
</feature>
<feature type="strand" evidence="3">
    <location>
        <begin position="41"/>
        <end position="53"/>
    </location>
</feature>
<feature type="strand" evidence="3">
    <location>
        <begin position="57"/>
        <end position="74"/>
    </location>
</feature>
<feature type="strand" evidence="3">
    <location>
        <begin position="82"/>
        <end position="89"/>
    </location>
</feature>
<feature type="helix" evidence="3">
    <location>
        <begin position="94"/>
        <end position="103"/>
    </location>
</feature>
<feature type="strand" evidence="3">
    <location>
        <begin position="106"/>
        <end position="108"/>
    </location>
</feature>
<feature type="strand" evidence="3">
    <location>
        <begin position="112"/>
        <end position="116"/>
    </location>
</feature>
<feature type="helix" evidence="3">
    <location>
        <begin position="117"/>
        <end position="123"/>
    </location>
</feature>
<feature type="strand" evidence="3">
    <location>
        <begin position="131"/>
        <end position="135"/>
    </location>
</feature>
<feature type="strand" evidence="3">
    <location>
        <begin position="150"/>
        <end position="166"/>
    </location>
</feature>
<feature type="strand" evidence="3">
    <location>
        <begin position="169"/>
        <end position="173"/>
    </location>
</feature>
<feature type="strand" evidence="3">
    <location>
        <begin position="176"/>
        <end position="182"/>
    </location>
</feature>
<feature type="strand" evidence="3">
    <location>
        <begin position="188"/>
        <end position="191"/>
    </location>
</feature>
<feature type="strand" evidence="3">
    <location>
        <begin position="197"/>
        <end position="201"/>
    </location>
</feature>
<feature type="strand" evidence="3">
    <location>
        <begin position="204"/>
        <end position="209"/>
    </location>
</feature>
<feature type="strand" evidence="3">
    <location>
        <begin position="214"/>
        <end position="227"/>
    </location>
</feature>
<feature type="strand" evidence="3">
    <location>
        <begin position="238"/>
        <end position="243"/>
    </location>
</feature>
<feature type="strand" evidence="3">
    <location>
        <begin position="246"/>
        <end position="250"/>
    </location>
</feature>
<feature type="strand" evidence="3">
    <location>
        <begin position="252"/>
        <end position="257"/>
    </location>
</feature>
<feature type="strand" evidence="3">
    <location>
        <begin position="260"/>
        <end position="264"/>
    </location>
</feature>
<feature type="helix" evidence="3">
    <location>
        <begin position="285"/>
        <end position="287"/>
    </location>
</feature>
<feature type="strand" evidence="3">
    <location>
        <begin position="294"/>
        <end position="296"/>
    </location>
</feature>
<feature type="helix" evidence="3">
    <location>
        <begin position="299"/>
        <end position="344"/>
    </location>
</feature>
<feature type="helix" evidence="3">
    <location>
        <begin position="348"/>
        <end position="352"/>
    </location>
</feature>
<feature type="strand" evidence="3">
    <location>
        <begin position="357"/>
        <end position="365"/>
    </location>
</feature>
<feature type="strand" evidence="3">
    <location>
        <begin position="367"/>
        <end position="371"/>
    </location>
</feature>
<feature type="strand" evidence="3">
    <location>
        <begin position="410"/>
        <end position="412"/>
    </location>
</feature>
<feature type="helix" evidence="3">
    <location>
        <begin position="434"/>
        <end position="436"/>
    </location>
</feature>
<feature type="helix" evidence="3">
    <location>
        <begin position="438"/>
        <end position="454"/>
    </location>
</feature>